<feature type="chain" id="PRO_0000109687" description="Glutamate 5-kinase">
    <location>
        <begin position="1"/>
        <end position="276"/>
    </location>
</feature>
<feature type="binding site" evidence="1">
    <location>
        <position position="14"/>
    </location>
    <ligand>
        <name>ATP</name>
        <dbReference type="ChEBI" id="CHEBI:30616"/>
    </ligand>
</feature>
<feature type="binding site" evidence="1">
    <location>
        <position position="54"/>
    </location>
    <ligand>
        <name>substrate</name>
    </ligand>
</feature>
<feature type="binding site" evidence="1">
    <location>
        <position position="141"/>
    </location>
    <ligand>
        <name>substrate</name>
    </ligand>
</feature>
<feature type="binding site" evidence="1">
    <location>
        <position position="157"/>
    </location>
    <ligand>
        <name>substrate</name>
    </ligand>
</feature>
<feature type="binding site" evidence="1">
    <location>
        <begin position="177"/>
        <end position="178"/>
    </location>
    <ligand>
        <name>ATP</name>
        <dbReference type="ChEBI" id="CHEBI:30616"/>
    </ligand>
</feature>
<feature type="binding site" evidence="1">
    <location>
        <begin position="219"/>
        <end position="225"/>
    </location>
    <ligand>
        <name>ATP</name>
        <dbReference type="ChEBI" id="CHEBI:30616"/>
    </ligand>
</feature>
<name>PROB_LISIN</name>
<accession>Q92CE4</accession>
<organism>
    <name type="scientific">Listeria innocua serovar 6a (strain ATCC BAA-680 / CLIP 11262)</name>
    <dbReference type="NCBI Taxonomy" id="272626"/>
    <lineage>
        <taxon>Bacteria</taxon>
        <taxon>Bacillati</taxon>
        <taxon>Bacillota</taxon>
        <taxon>Bacilli</taxon>
        <taxon>Bacillales</taxon>
        <taxon>Listeriaceae</taxon>
        <taxon>Listeria</taxon>
    </lineage>
</organism>
<sequence>MRESLKNSKRLVIKVGTSTLMYGNGHINLRTIEKLAMVLSDLRNEGKEVILVSSGAIGVGCHKLQLPVRPTSIPEQQAVASVGQSELMHIYSKFFGEYGQVVGQVLLTRDVTDFPISRENVMNTLESLLERGIIPIVNENDTVAVEELEHVTKYGDNDLLSAIVAKLVQADLLIMLSDIDGFYGSNPSTDPDAVMFSEINQITPEIEALAGGKGSKFGTGGMLTKLSAASYCMNANQKMILTNGKNPTIIFDIMQGEQVGTLFASKKEEFSHDGTH</sequence>
<reference key="1">
    <citation type="journal article" date="2001" name="Science">
        <title>Comparative genomics of Listeria species.</title>
        <authorList>
            <person name="Glaser P."/>
            <person name="Frangeul L."/>
            <person name="Buchrieser C."/>
            <person name="Rusniok C."/>
            <person name="Amend A."/>
            <person name="Baquero F."/>
            <person name="Berche P."/>
            <person name="Bloecker H."/>
            <person name="Brandt P."/>
            <person name="Chakraborty T."/>
            <person name="Charbit A."/>
            <person name="Chetouani F."/>
            <person name="Couve E."/>
            <person name="de Daruvar A."/>
            <person name="Dehoux P."/>
            <person name="Domann E."/>
            <person name="Dominguez-Bernal G."/>
            <person name="Duchaud E."/>
            <person name="Durant L."/>
            <person name="Dussurget O."/>
            <person name="Entian K.-D."/>
            <person name="Fsihi H."/>
            <person name="Garcia-del Portillo F."/>
            <person name="Garrido P."/>
            <person name="Gautier L."/>
            <person name="Goebel W."/>
            <person name="Gomez-Lopez N."/>
            <person name="Hain T."/>
            <person name="Hauf J."/>
            <person name="Jackson D."/>
            <person name="Jones L.-M."/>
            <person name="Kaerst U."/>
            <person name="Kreft J."/>
            <person name="Kuhn M."/>
            <person name="Kunst F."/>
            <person name="Kurapkat G."/>
            <person name="Madueno E."/>
            <person name="Maitournam A."/>
            <person name="Mata Vicente J."/>
            <person name="Ng E."/>
            <person name="Nedjari H."/>
            <person name="Nordsiek G."/>
            <person name="Novella S."/>
            <person name="de Pablos B."/>
            <person name="Perez-Diaz J.-C."/>
            <person name="Purcell R."/>
            <person name="Remmel B."/>
            <person name="Rose M."/>
            <person name="Schlueter T."/>
            <person name="Simoes N."/>
            <person name="Tierrez A."/>
            <person name="Vazquez-Boland J.-A."/>
            <person name="Voss H."/>
            <person name="Wehland J."/>
            <person name="Cossart P."/>
        </authorList>
    </citation>
    <scope>NUCLEOTIDE SEQUENCE [LARGE SCALE GENOMIC DNA]</scope>
    <source>
        <strain>ATCC BAA-680 / CLIP 11262</strain>
    </source>
</reference>
<dbReference type="EC" id="2.7.2.11" evidence="1"/>
<dbReference type="EMBL" id="AL596168">
    <property type="protein sequence ID" value="CAC96459.1"/>
    <property type="molecule type" value="Genomic_DNA"/>
</dbReference>
<dbReference type="PIR" id="AC1586">
    <property type="entry name" value="AC1586"/>
</dbReference>
<dbReference type="RefSeq" id="WP_010990843.1">
    <property type="nucleotide sequence ID" value="NC_003212.1"/>
</dbReference>
<dbReference type="SMR" id="Q92CE4"/>
<dbReference type="STRING" id="272626.gene:17565559"/>
<dbReference type="GeneID" id="93234679"/>
<dbReference type="KEGG" id="lin:proB"/>
<dbReference type="eggNOG" id="COG0263">
    <property type="taxonomic scope" value="Bacteria"/>
</dbReference>
<dbReference type="HOGENOM" id="CLU_025400_0_2_9"/>
<dbReference type="OrthoDB" id="9804434at2"/>
<dbReference type="UniPathway" id="UPA00098">
    <property type="reaction ID" value="UER00359"/>
</dbReference>
<dbReference type="Proteomes" id="UP000002513">
    <property type="component" value="Chromosome"/>
</dbReference>
<dbReference type="GO" id="GO:0005829">
    <property type="term" value="C:cytosol"/>
    <property type="evidence" value="ECO:0007669"/>
    <property type="project" value="TreeGrafter"/>
</dbReference>
<dbReference type="GO" id="GO:0005524">
    <property type="term" value="F:ATP binding"/>
    <property type="evidence" value="ECO:0007669"/>
    <property type="project" value="UniProtKB-KW"/>
</dbReference>
<dbReference type="GO" id="GO:0004349">
    <property type="term" value="F:glutamate 5-kinase activity"/>
    <property type="evidence" value="ECO:0007669"/>
    <property type="project" value="UniProtKB-UniRule"/>
</dbReference>
<dbReference type="GO" id="GO:0055129">
    <property type="term" value="P:L-proline biosynthetic process"/>
    <property type="evidence" value="ECO:0007669"/>
    <property type="project" value="UniProtKB-UniRule"/>
</dbReference>
<dbReference type="CDD" id="cd04242">
    <property type="entry name" value="AAK_G5K_ProB"/>
    <property type="match status" value="1"/>
</dbReference>
<dbReference type="FunFam" id="3.40.1160.10:FF:000036">
    <property type="entry name" value="Glutamate 5-kinase"/>
    <property type="match status" value="1"/>
</dbReference>
<dbReference type="Gene3D" id="3.40.1160.10">
    <property type="entry name" value="Acetylglutamate kinase-like"/>
    <property type="match status" value="1"/>
</dbReference>
<dbReference type="HAMAP" id="MF_00456">
    <property type="entry name" value="ProB"/>
    <property type="match status" value="1"/>
</dbReference>
<dbReference type="InterPro" id="IPR036393">
    <property type="entry name" value="AceGlu_kinase-like_sf"/>
</dbReference>
<dbReference type="InterPro" id="IPR001048">
    <property type="entry name" value="Asp/Glu/Uridylate_kinase"/>
</dbReference>
<dbReference type="InterPro" id="IPR041739">
    <property type="entry name" value="G5K_ProB"/>
</dbReference>
<dbReference type="InterPro" id="IPR001057">
    <property type="entry name" value="Glu/AcGlu_kinase"/>
</dbReference>
<dbReference type="InterPro" id="IPR011529">
    <property type="entry name" value="Glu_5kinase"/>
</dbReference>
<dbReference type="InterPro" id="IPR005715">
    <property type="entry name" value="Glu_5kinase/COase_Synthase"/>
</dbReference>
<dbReference type="InterPro" id="IPR019797">
    <property type="entry name" value="Glutamate_5-kinase_CS"/>
</dbReference>
<dbReference type="NCBIfam" id="TIGR01027">
    <property type="entry name" value="proB"/>
    <property type="match status" value="1"/>
</dbReference>
<dbReference type="PANTHER" id="PTHR43654">
    <property type="entry name" value="GLUTAMATE 5-KINASE"/>
    <property type="match status" value="1"/>
</dbReference>
<dbReference type="PANTHER" id="PTHR43654:SF1">
    <property type="entry name" value="ISOPENTENYL PHOSPHATE KINASE"/>
    <property type="match status" value="1"/>
</dbReference>
<dbReference type="Pfam" id="PF00696">
    <property type="entry name" value="AA_kinase"/>
    <property type="match status" value="1"/>
</dbReference>
<dbReference type="PIRSF" id="PIRSF000729">
    <property type="entry name" value="GK"/>
    <property type="match status" value="1"/>
</dbReference>
<dbReference type="PRINTS" id="PR00474">
    <property type="entry name" value="GLU5KINASE"/>
</dbReference>
<dbReference type="SUPFAM" id="SSF53633">
    <property type="entry name" value="Carbamate kinase-like"/>
    <property type="match status" value="1"/>
</dbReference>
<dbReference type="PROSITE" id="PS00902">
    <property type="entry name" value="GLUTAMATE_5_KINASE"/>
    <property type="match status" value="1"/>
</dbReference>
<proteinExistence type="inferred from homology"/>
<comment type="function">
    <text evidence="1">Catalyzes the transfer of a phosphate group to glutamate to form L-glutamate 5-phosphate.</text>
</comment>
<comment type="catalytic activity">
    <reaction evidence="1">
        <text>L-glutamate + ATP = L-glutamyl 5-phosphate + ADP</text>
        <dbReference type="Rhea" id="RHEA:14877"/>
        <dbReference type="ChEBI" id="CHEBI:29985"/>
        <dbReference type="ChEBI" id="CHEBI:30616"/>
        <dbReference type="ChEBI" id="CHEBI:58274"/>
        <dbReference type="ChEBI" id="CHEBI:456216"/>
        <dbReference type="EC" id="2.7.2.11"/>
    </reaction>
</comment>
<comment type="pathway">
    <text evidence="1">Amino-acid biosynthesis; L-proline biosynthesis; L-glutamate 5-semialdehyde from L-glutamate: step 1/2.</text>
</comment>
<comment type="subcellular location">
    <subcellularLocation>
        <location evidence="1">Cytoplasm</location>
    </subcellularLocation>
</comment>
<comment type="similarity">
    <text evidence="1">Belongs to the glutamate 5-kinase family.</text>
</comment>
<keyword id="KW-0028">Amino-acid biosynthesis</keyword>
<keyword id="KW-0067">ATP-binding</keyword>
<keyword id="KW-0963">Cytoplasm</keyword>
<keyword id="KW-0418">Kinase</keyword>
<keyword id="KW-0547">Nucleotide-binding</keyword>
<keyword id="KW-0641">Proline biosynthesis</keyword>
<keyword id="KW-0808">Transferase</keyword>
<evidence type="ECO:0000255" key="1">
    <source>
        <dbReference type="HAMAP-Rule" id="MF_00456"/>
    </source>
</evidence>
<protein>
    <recommendedName>
        <fullName evidence="1">Glutamate 5-kinase</fullName>
        <ecNumber evidence="1">2.7.2.11</ecNumber>
    </recommendedName>
    <alternativeName>
        <fullName evidence="1">Gamma-glutamyl kinase</fullName>
        <shortName evidence="1">GK</shortName>
    </alternativeName>
</protein>
<gene>
    <name evidence="1" type="primary">proB</name>
    <name type="ordered locus">lin1228</name>
</gene>